<proteinExistence type="evidence at protein level"/>
<comment type="function">
    <text evidence="3">TFIID is a multimeric protein complex that plays a central role in mediating promoter responses to various activators and repressors.</text>
</comment>
<comment type="subunit">
    <text evidence="3">Belongs to the TFIID complex which is composed of TATA binding protein (Tbp) and a number of TBP-associated factors (TAFs). Also a member of the histone acetylase (HAT) complex.</text>
</comment>
<comment type="subcellular location">
    <subcellularLocation>
        <location evidence="3">Cytoplasm</location>
    </subcellularLocation>
    <subcellularLocation>
        <location evidence="3">Nucleus</location>
    </subcellularLocation>
</comment>
<comment type="tissue specificity">
    <text evidence="3">At embryonic stage 9, highest expression is detected within the ectoderm, ventral chord, and anterior foregut primordium. Later in development preferential expression is in the foregut, proventriculus, and central nervous system. Coexpressed with Taf10b in the lateral epidermis and anal plate.</text>
</comment>
<comment type="developmental stage">
    <text evidence="3">Expressed both maternally and zygotically.</text>
</comment>
<comment type="similarity">
    <text evidence="1">Belongs to the TAF10 family.</text>
</comment>
<sequence length="167" mass="18521">MASDGEDISVTPAESVTSATDTEEEDIDSPLMQSELHSDEEQPDVEEVPLTTEESEMDELIKQLEDYSPTIPDALTMHILKTAGFCTVDPKIVRLVSVSAQKFISDIANDALQHCKTRTTNIQHSSGHSSSKDKKNPKDRKYTLAMEDLVPALADHGITMRKPQYFV</sequence>
<dbReference type="EMBL" id="AJ243836">
    <property type="protein sequence ID" value="CAB55760.2"/>
    <property type="molecule type" value="mRNA"/>
</dbReference>
<dbReference type="EMBL" id="AJ276419">
    <property type="protein sequence ID" value="CAC08819.1"/>
    <property type="molecule type" value="mRNA"/>
</dbReference>
<dbReference type="EMBL" id="AE014134">
    <property type="protein sequence ID" value="AAF51210.1"/>
    <property type="molecule type" value="Genomic_DNA"/>
</dbReference>
<dbReference type="EMBL" id="AY118419">
    <property type="protein sequence ID" value="AAM48448.1"/>
    <property type="molecule type" value="mRNA"/>
</dbReference>
<dbReference type="RefSeq" id="NP_477463.1">
    <property type="nucleotide sequence ID" value="NM_058115.5"/>
</dbReference>
<dbReference type="SMR" id="Q9U5W9"/>
<dbReference type="BioGRID" id="59692">
    <property type="interactions" value="14"/>
</dbReference>
<dbReference type="DIP" id="DIP-23060N"/>
<dbReference type="FunCoup" id="Q9U5W9">
    <property type="interactions" value="1216"/>
</dbReference>
<dbReference type="IntAct" id="Q9U5W9">
    <property type="interactions" value="9"/>
</dbReference>
<dbReference type="MINT" id="Q9U5W9"/>
<dbReference type="STRING" id="7227.FBpp0077401"/>
<dbReference type="PaxDb" id="7227-FBpp0077401"/>
<dbReference type="DNASU" id="33469"/>
<dbReference type="EnsemblMetazoa" id="FBtr0077717">
    <property type="protein sequence ID" value="FBpp0077401"/>
    <property type="gene ID" value="FBgn0028398"/>
</dbReference>
<dbReference type="GeneID" id="33469"/>
<dbReference type="KEGG" id="dme:Dmel_CG2859"/>
<dbReference type="AGR" id="FB:FBgn0028398"/>
<dbReference type="CTD" id="6881"/>
<dbReference type="FlyBase" id="FBgn0028398">
    <property type="gene designation" value="Taf10"/>
</dbReference>
<dbReference type="VEuPathDB" id="VectorBase:FBgn0028398"/>
<dbReference type="eggNOG" id="KOG3423">
    <property type="taxonomic scope" value="Eukaryota"/>
</dbReference>
<dbReference type="GeneTree" id="ENSGT00390000009368"/>
<dbReference type="HOGENOM" id="CLU_064104_4_1_1"/>
<dbReference type="InParanoid" id="Q9U5W9"/>
<dbReference type="OMA" id="ALTMHIL"/>
<dbReference type="OrthoDB" id="154356at2759"/>
<dbReference type="PhylomeDB" id="Q9U5W9"/>
<dbReference type="BioGRID-ORCS" id="33469">
    <property type="hits" value="0 hits in 1 CRISPR screen"/>
</dbReference>
<dbReference type="GenomeRNAi" id="33469"/>
<dbReference type="PRO" id="PR:Q9U5W9"/>
<dbReference type="Proteomes" id="UP000000803">
    <property type="component" value="Chromosome 2L"/>
</dbReference>
<dbReference type="Bgee" id="FBgn0028398">
    <property type="expression patterns" value="Expressed in adult class III enteroendocrine cell in adult midgut (Drosophila) and 140 other cell types or tissues"/>
</dbReference>
<dbReference type="GO" id="GO:0005737">
    <property type="term" value="C:cytoplasm"/>
    <property type="evidence" value="ECO:0000314"/>
    <property type="project" value="FlyBase"/>
</dbReference>
<dbReference type="GO" id="GO:0000123">
    <property type="term" value="C:histone acetyltransferase complex"/>
    <property type="evidence" value="ECO:0000250"/>
    <property type="project" value="FlyBase"/>
</dbReference>
<dbReference type="GO" id="GO:0005634">
    <property type="term" value="C:nucleus"/>
    <property type="evidence" value="ECO:0000314"/>
    <property type="project" value="FlyBase"/>
</dbReference>
<dbReference type="GO" id="GO:0000124">
    <property type="term" value="C:SAGA complex"/>
    <property type="evidence" value="ECO:0000318"/>
    <property type="project" value="GO_Central"/>
</dbReference>
<dbReference type="GO" id="GO:0005669">
    <property type="term" value="C:transcription factor TFIID complex"/>
    <property type="evidence" value="ECO:0000314"/>
    <property type="project" value="UniProtKB"/>
</dbReference>
<dbReference type="GO" id="GO:1990841">
    <property type="term" value="F:promoter-specific chromatin binding"/>
    <property type="evidence" value="ECO:0000318"/>
    <property type="project" value="GO_Central"/>
</dbReference>
<dbReference type="GO" id="GO:0006367">
    <property type="term" value="P:transcription initiation at RNA polymerase II promoter"/>
    <property type="evidence" value="ECO:0000314"/>
    <property type="project" value="UniProtKB"/>
</dbReference>
<dbReference type="CDD" id="cd07982">
    <property type="entry name" value="HFD_TAF10"/>
    <property type="match status" value="1"/>
</dbReference>
<dbReference type="InterPro" id="IPR003923">
    <property type="entry name" value="TAF10"/>
</dbReference>
<dbReference type="PANTHER" id="PTHR21242">
    <property type="entry name" value="TRANSCRIPTION INITIATION FACTOR TFIID SUBUNIT 10"/>
    <property type="match status" value="1"/>
</dbReference>
<dbReference type="PANTHER" id="PTHR21242:SF0">
    <property type="entry name" value="TRANSCRIPTION INITIATION FACTOR TFIID SUBUNIT 10"/>
    <property type="match status" value="1"/>
</dbReference>
<dbReference type="Pfam" id="PF03540">
    <property type="entry name" value="TAF10"/>
    <property type="match status" value="1"/>
</dbReference>
<dbReference type="PIRSF" id="PIRSF017246">
    <property type="entry name" value="TFIID_TAF10"/>
    <property type="match status" value="1"/>
</dbReference>
<dbReference type="PRINTS" id="PR01443">
    <property type="entry name" value="TFIID30KDSUB"/>
</dbReference>
<evidence type="ECO:0000255" key="1"/>
<evidence type="ECO:0000256" key="2">
    <source>
        <dbReference type="SAM" id="MobiDB-lite"/>
    </source>
</evidence>
<evidence type="ECO:0000269" key="3">
    <source>
    </source>
</evidence>
<evidence type="ECO:0000269" key="4">
    <source>
    </source>
</evidence>
<evidence type="ECO:0000269" key="5">
    <source>
    </source>
</evidence>
<evidence type="ECO:0000305" key="6"/>
<evidence type="ECO:0000312" key="7">
    <source>
        <dbReference type="EMBL" id="AAF51210.1"/>
    </source>
</evidence>
<evidence type="ECO:0000312" key="8">
    <source>
        <dbReference type="EMBL" id="AAM48448.1"/>
    </source>
</evidence>
<evidence type="ECO:0000312" key="9">
    <source>
        <dbReference type="EMBL" id="CAB55760.2"/>
    </source>
</evidence>
<evidence type="ECO:0000312" key="10">
    <source>
        <dbReference type="EMBL" id="CAC08819.1"/>
    </source>
</evidence>
<evidence type="ECO:0000312" key="11">
    <source>
        <dbReference type="FlyBase" id="FBgn0028398"/>
    </source>
</evidence>
<feature type="chain" id="PRO_0000118899" description="Transcription initiation factor TFIID subunit 10">
    <location>
        <begin position="1"/>
        <end position="167"/>
    </location>
</feature>
<feature type="region of interest" description="Disordered" evidence="2">
    <location>
        <begin position="1"/>
        <end position="56"/>
    </location>
</feature>
<feature type="region of interest" description="Disordered" evidence="2">
    <location>
        <begin position="119"/>
        <end position="139"/>
    </location>
</feature>
<feature type="compositionally biased region" description="Acidic residues" evidence="2">
    <location>
        <begin position="41"/>
        <end position="56"/>
    </location>
</feature>
<feature type="compositionally biased region" description="Basic and acidic residues" evidence="2">
    <location>
        <begin position="130"/>
        <end position="139"/>
    </location>
</feature>
<accession>Q9U5W9</accession>
<accession>Q9VQG3</accession>
<keyword id="KW-0963">Cytoplasm</keyword>
<keyword id="KW-0539">Nucleus</keyword>
<keyword id="KW-1185">Reference proteome</keyword>
<keyword id="KW-0804">Transcription</keyword>
<keyword id="KW-0805">Transcription regulation</keyword>
<gene>
    <name evidence="11" type="primary">Taf10</name>
    <name type="ORF">CG2859</name>
</gene>
<name>TAF10_DROME</name>
<protein>
    <recommendedName>
        <fullName>Transcription initiation factor TFIID subunit 10</fullName>
    </recommendedName>
    <alternativeName>
        <fullName>Transcription initiation factor TFIID 24 kDa subunit</fullName>
        <shortName>TAFII-24</shortName>
        <shortName>TAFII24</shortName>
    </alternativeName>
    <alternativeName>
        <fullName>dTAF(II)24</fullName>
    </alternativeName>
</protein>
<reference evidence="6 9" key="1">
    <citation type="journal article" date="2000" name="Mol. Cell. Biol.">
        <title>Two novel Drosophila TAFIIs have homology with human TAFII30 and are differentially regulated during development.</title>
        <authorList>
            <person name="Georgieva S."/>
            <person name="Kirschner D.B."/>
            <person name="Jagla T."/>
            <person name="Nabirochkina E."/>
            <person name="Hanke S."/>
            <person name="Schenkel H."/>
            <person name="de Lorenzo C."/>
            <person name="Sinha P."/>
            <person name="Jagla K."/>
            <person name="Mechler B."/>
            <person name="Tora L."/>
        </authorList>
    </citation>
    <scope>NUCLEOTIDE SEQUENCE [MRNA]</scope>
    <scope>FUNCTION</scope>
    <scope>SUBUNIT</scope>
    <scope>SUBCELLULAR LOCATION</scope>
    <scope>TISSUE SPECIFICITY</scope>
    <scope>DEVELOPMENTAL STAGE</scope>
    <source>
        <tissue evidence="3">Embryo</tissue>
    </source>
</reference>
<reference evidence="10" key="2">
    <citation type="journal article" date="2001" name="Mol. Cell. Biol.">
        <title>Prodos is a conserved transcriptional regulator that interacts with dTAF(II)16 in Drosophila melanogaster.</title>
        <authorList>
            <person name="Hernandez-Hernandez A."/>
            <person name="Ferrus A."/>
        </authorList>
    </citation>
    <scope>NUCLEOTIDE SEQUENCE [MRNA]</scope>
</reference>
<reference evidence="7" key="3">
    <citation type="journal article" date="2000" name="Science">
        <title>The genome sequence of Drosophila melanogaster.</title>
        <authorList>
            <person name="Adams M.D."/>
            <person name="Celniker S.E."/>
            <person name="Holt R.A."/>
            <person name="Evans C.A."/>
            <person name="Gocayne J.D."/>
            <person name="Amanatides P.G."/>
            <person name="Scherer S.E."/>
            <person name="Li P.W."/>
            <person name="Hoskins R.A."/>
            <person name="Galle R.F."/>
            <person name="George R.A."/>
            <person name="Lewis S.E."/>
            <person name="Richards S."/>
            <person name="Ashburner M."/>
            <person name="Henderson S.N."/>
            <person name="Sutton G.G."/>
            <person name="Wortman J.R."/>
            <person name="Yandell M.D."/>
            <person name="Zhang Q."/>
            <person name="Chen L.X."/>
            <person name="Brandon R.C."/>
            <person name="Rogers Y.-H.C."/>
            <person name="Blazej R.G."/>
            <person name="Champe M."/>
            <person name="Pfeiffer B.D."/>
            <person name="Wan K.H."/>
            <person name="Doyle C."/>
            <person name="Baxter E.G."/>
            <person name="Helt G."/>
            <person name="Nelson C.R."/>
            <person name="Miklos G.L.G."/>
            <person name="Abril J.F."/>
            <person name="Agbayani A."/>
            <person name="An H.-J."/>
            <person name="Andrews-Pfannkoch C."/>
            <person name="Baldwin D."/>
            <person name="Ballew R.M."/>
            <person name="Basu A."/>
            <person name="Baxendale J."/>
            <person name="Bayraktaroglu L."/>
            <person name="Beasley E.M."/>
            <person name="Beeson K.Y."/>
            <person name="Benos P.V."/>
            <person name="Berman B.P."/>
            <person name="Bhandari D."/>
            <person name="Bolshakov S."/>
            <person name="Borkova D."/>
            <person name="Botchan M.R."/>
            <person name="Bouck J."/>
            <person name="Brokstein P."/>
            <person name="Brottier P."/>
            <person name="Burtis K.C."/>
            <person name="Busam D.A."/>
            <person name="Butler H."/>
            <person name="Cadieu E."/>
            <person name="Center A."/>
            <person name="Chandra I."/>
            <person name="Cherry J.M."/>
            <person name="Cawley S."/>
            <person name="Dahlke C."/>
            <person name="Davenport L.B."/>
            <person name="Davies P."/>
            <person name="de Pablos B."/>
            <person name="Delcher A."/>
            <person name="Deng Z."/>
            <person name="Mays A.D."/>
            <person name="Dew I."/>
            <person name="Dietz S.M."/>
            <person name="Dodson K."/>
            <person name="Doup L.E."/>
            <person name="Downes M."/>
            <person name="Dugan-Rocha S."/>
            <person name="Dunkov B.C."/>
            <person name="Dunn P."/>
            <person name="Durbin K.J."/>
            <person name="Evangelista C.C."/>
            <person name="Ferraz C."/>
            <person name="Ferriera S."/>
            <person name="Fleischmann W."/>
            <person name="Fosler C."/>
            <person name="Gabrielian A.E."/>
            <person name="Garg N.S."/>
            <person name="Gelbart W.M."/>
            <person name="Glasser K."/>
            <person name="Glodek A."/>
            <person name="Gong F."/>
            <person name="Gorrell J.H."/>
            <person name="Gu Z."/>
            <person name="Guan P."/>
            <person name="Harris M."/>
            <person name="Harris N.L."/>
            <person name="Harvey D.A."/>
            <person name="Heiman T.J."/>
            <person name="Hernandez J.R."/>
            <person name="Houck J."/>
            <person name="Hostin D."/>
            <person name="Houston K.A."/>
            <person name="Howland T.J."/>
            <person name="Wei M.-H."/>
            <person name="Ibegwam C."/>
            <person name="Jalali M."/>
            <person name="Kalush F."/>
            <person name="Karpen G.H."/>
            <person name="Ke Z."/>
            <person name="Kennison J.A."/>
            <person name="Ketchum K.A."/>
            <person name="Kimmel B.E."/>
            <person name="Kodira C.D."/>
            <person name="Kraft C.L."/>
            <person name="Kravitz S."/>
            <person name="Kulp D."/>
            <person name="Lai Z."/>
            <person name="Lasko P."/>
            <person name="Lei Y."/>
            <person name="Levitsky A.A."/>
            <person name="Li J.H."/>
            <person name="Li Z."/>
            <person name="Liang Y."/>
            <person name="Lin X."/>
            <person name="Liu X."/>
            <person name="Mattei B."/>
            <person name="McIntosh T.C."/>
            <person name="McLeod M.P."/>
            <person name="McPherson D."/>
            <person name="Merkulov G."/>
            <person name="Milshina N.V."/>
            <person name="Mobarry C."/>
            <person name="Morris J."/>
            <person name="Moshrefi A."/>
            <person name="Mount S.M."/>
            <person name="Moy M."/>
            <person name="Murphy B."/>
            <person name="Murphy L."/>
            <person name="Muzny D.M."/>
            <person name="Nelson D.L."/>
            <person name="Nelson D.R."/>
            <person name="Nelson K.A."/>
            <person name="Nixon K."/>
            <person name="Nusskern D.R."/>
            <person name="Pacleb J.M."/>
            <person name="Palazzolo M."/>
            <person name="Pittman G.S."/>
            <person name="Pan S."/>
            <person name="Pollard J."/>
            <person name="Puri V."/>
            <person name="Reese M.G."/>
            <person name="Reinert K."/>
            <person name="Remington K."/>
            <person name="Saunders R.D.C."/>
            <person name="Scheeler F."/>
            <person name="Shen H."/>
            <person name="Shue B.C."/>
            <person name="Siden-Kiamos I."/>
            <person name="Simpson M."/>
            <person name="Skupski M.P."/>
            <person name="Smith T.J."/>
            <person name="Spier E."/>
            <person name="Spradling A.C."/>
            <person name="Stapleton M."/>
            <person name="Strong R."/>
            <person name="Sun E."/>
            <person name="Svirskas R."/>
            <person name="Tector C."/>
            <person name="Turner R."/>
            <person name="Venter E."/>
            <person name="Wang A.H."/>
            <person name="Wang X."/>
            <person name="Wang Z.-Y."/>
            <person name="Wassarman D.A."/>
            <person name="Weinstock G.M."/>
            <person name="Weissenbach J."/>
            <person name="Williams S.M."/>
            <person name="Woodage T."/>
            <person name="Worley K.C."/>
            <person name="Wu D."/>
            <person name="Yang S."/>
            <person name="Yao Q.A."/>
            <person name="Ye J."/>
            <person name="Yeh R.-F."/>
            <person name="Zaveri J.S."/>
            <person name="Zhan M."/>
            <person name="Zhang G."/>
            <person name="Zhao Q."/>
            <person name="Zheng L."/>
            <person name="Zheng X.H."/>
            <person name="Zhong F.N."/>
            <person name="Zhong W."/>
            <person name="Zhou X."/>
            <person name="Zhu S.C."/>
            <person name="Zhu X."/>
            <person name="Smith H.O."/>
            <person name="Gibbs R.A."/>
            <person name="Myers E.W."/>
            <person name="Rubin G.M."/>
            <person name="Venter J.C."/>
        </authorList>
    </citation>
    <scope>NUCLEOTIDE SEQUENCE [LARGE SCALE GENOMIC DNA]</scope>
    <source>
        <strain evidence="4">Berkeley</strain>
    </source>
</reference>
<reference evidence="6 7" key="4">
    <citation type="journal article" date="2002" name="Genome Biol.">
        <title>Annotation of the Drosophila melanogaster euchromatic genome: a systematic review.</title>
        <authorList>
            <person name="Misra S."/>
            <person name="Crosby M.A."/>
            <person name="Mungall C.J."/>
            <person name="Matthews B.B."/>
            <person name="Campbell K.S."/>
            <person name="Hradecky P."/>
            <person name="Huang Y."/>
            <person name="Kaminker J.S."/>
            <person name="Millburn G.H."/>
            <person name="Prochnik S.E."/>
            <person name="Smith C.D."/>
            <person name="Tupy J.L."/>
            <person name="Whitfield E.J."/>
            <person name="Bayraktaroglu L."/>
            <person name="Berman B.P."/>
            <person name="Bettencourt B.R."/>
            <person name="Celniker S.E."/>
            <person name="de Grey A.D.N.J."/>
            <person name="Drysdale R.A."/>
            <person name="Harris N.L."/>
            <person name="Richter J."/>
            <person name="Russo S."/>
            <person name="Schroeder A.J."/>
            <person name="Shu S.Q."/>
            <person name="Stapleton M."/>
            <person name="Yamada C."/>
            <person name="Ashburner M."/>
            <person name="Gelbart W.M."/>
            <person name="Rubin G.M."/>
            <person name="Lewis S.E."/>
        </authorList>
    </citation>
    <scope>GENOME REANNOTATION</scope>
    <source>
        <strain>Berkeley</strain>
    </source>
</reference>
<reference evidence="8" key="5">
    <citation type="journal article" date="2002" name="Genome Biol.">
        <title>A Drosophila full-length cDNA resource.</title>
        <authorList>
            <person name="Stapleton M."/>
            <person name="Carlson J.W."/>
            <person name="Brokstein P."/>
            <person name="Yu C."/>
            <person name="Champe M."/>
            <person name="George R.A."/>
            <person name="Guarin H."/>
            <person name="Kronmiller B."/>
            <person name="Pacleb J.M."/>
            <person name="Park S."/>
            <person name="Wan K.H."/>
            <person name="Rubin G.M."/>
            <person name="Celniker S.E."/>
        </authorList>
    </citation>
    <scope>NUCLEOTIDE SEQUENCE [LARGE SCALE MRNA]</scope>
    <source>
        <strain evidence="8">Berkeley</strain>
        <tissue evidence="5">Embryo</tissue>
    </source>
</reference>
<organism>
    <name type="scientific">Drosophila melanogaster</name>
    <name type="common">Fruit fly</name>
    <dbReference type="NCBI Taxonomy" id="7227"/>
    <lineage>
        <taxon>Eukaryota</taxon>
        <taxon>Metazoa</taxon>
        <taxon>Ecdysozoa</taxon>
        <taxon>Arthropoda</taxon>
        <taxon>Hexapoda</taxon>
        <taxon>Insecta</taxon>
        <taxon>Pterygota</taxon>
        <taxon>Neoptera</taxon>
        <taxon>Endopterygota</taxon>
        <taxon>Diptera</taxon>
        <taxon>Brachycera</taxon>
        <taxon>Muscomorpha</taxon>
        <taxon>Ephydroidea</taxon>
        <taxon>Drosophilidae</taxon>
        <taxon>Drosophila</taxon>
        <taxon>Sophophora</taxon>
    </lineage>
</organism>